<protein>
    <recommendedName>
        <fullName evidence="1">Large ribosomal subunit protein uL1</fullName>
    </recommendedName>
    <alternativeName>
        <fullName evidence="2">50S ribosomal protein L1</fullName>
    </alternativeName>
</protein>
<evidence type="ECO:0000255" key="1">
    <source>
        <dbReference type="HAMAP-Rule" id="MF_01318"/>
    </source>
</evidence>
<evidence type="ECO:0000305" key="2"/>
<dbReference type="EMBL" id="CP001175">
    <property type="protein sequence ID" value="ACK40728.1"/>
    <property type="molecule type" value="Genomic_DNA"/>
</dbReference>
<dbReference type="RefSeq" id="WP_003726838.1">
    <property type="nucleotide sequence ID" value="NC_011660.1"/>
</dbReference>
<dbReference type="SMR" id="B8DF06"/>
<dbReference type="GeneID" id="93233731"/>
<dbReference type="KEGG" id="lmh:LMHCC_2391"/>
<dbReference type="HOGENOM" id="CLU_062853_0_0_9"/>
<dbReference type="GO" id="GO:0015934">
    <property type="term" value="C:large ribosomal subunit"/>
    <property type="evidence" value="ECO:0007669"/>
    <property type="project" value="InterPro"/>
</dbReference>
<dbReference type="GO" id="GO:0019843">
    <property type="term" value="F:rRNA binding"/>
    <property type="evidence" value="ECO:0007669"/>
    <property type="project" value="UniProtKB-UniRule"/>
</dbReference>
<dbReference type="GO" id="GO:0003735">
    <property type="term" value="F:structural constituent of ribosome"/>
    <property type="evidence" value="ECO:0007669"/>
    <property type="project" value="InterPro"/>
</dbReference>
<dbReference type="GO" id="GO:0000049">
    <property type="term" value="F:tRNA binding"/>
    <property type="evidence" value="ECO:0007669"/>
    <property type="project" value="UniProtKB-KW"/>
</dbReference>
<dbReference type="GO" id="GO:0006417">
    <property type="term" value="P:regulation of translation"/>
    <property type="evidence" value="ECO:0007669"/>
    <property type="project" value="UniProtKB-KW"/>
</dbReference>
<dbReference type="GO" id="GO:0006412">
    <property type="term" value="P:translation"/>
    <property type="evidence" value="ECO:0007669"/>
    <property type="project" value="UniProtKB-UniRule"/>
</dbReference>
<dbReference type="CDD" id="cd00403">
    <property type="entry name" value="Ribosomal_L1"/>
    <property type="match status" value="1"/>
</dbReference>
<dbReference type="FunFam" id="3.40.50.790:FF:000001">
    <property type="entry name" value="50S ribosomal protein L1"/>
    <property type="match status" value="1"/>
</dbReference>
<dbReference type="Gene3D" id="3.30.190.20">
    <property type="match status" value="1"/>
</dbReference>
<dbReference type="Gene3D" id="3.40.50.790">
    <property type="match status" value="1"/>
</dbReference>
<dbReference type="HAMAP" id="MF_01318_B">
    <property type="entry name" value="Ribosomal_uL1_B"/>
    <property type="match status" value="1"/>
</dbReference>
<dbReference type="InterPro" id="IPR005878">
    <property type="entry name" value="Ribosom_uL1_bac-type"/>
</dbReference>
<dbReference type="InterPro" id="IPR002143">
    <property type="entry name" value="Ribosomal_uL1"/>
</dbReference>
<dbReference type="InterPro" id="IPR023674">
    <property type="entry name" value="Ribosomal_uL1-like"/>
</dbReference>
<dbReference type="InterPro" id="IPR028364">
    <property type="entry name" value="Ribosomal_uL1/biogenesis"/>
</dbReference>
<dbReference type="InterPro" id="IPR016095">
    <property type="entry name" value="Ribosomal_uL1_3-a/b-sand"/>
</dbReference>
<dbReference type="InterPro" id="IPR023673">
    <property type="entry name" value="Ribosomal_uL1_CS"/>
</dbReference>
<dbReference type="NCBIfam" id="TIGR01169">
    <property type="entry name" value="rplA_bact"/>
    <property type="match status" value="1"/>
</dbReference>
<dbReference type="PANTHER" id="PTHR36427">
    <property type="entry name" value="54S RIBOSOMAL PROTEIN L1, MITOCHONDRIAL"/>
    <property type="match status" value="1"/>
</dbReference>
<dbReference type="PANTHER" id="PTHR36427:SF3">
    <property type="entry name" value="LARGE RIBOSOMAL SUBUNIT PROTEIN UL1M"/>
    <property type="match status" value="1"/>
</dbReference>
<dbReference type="Pfam" id="PF00687">
    <property type="entry name" value="Ribosomal_L1"/>
    <property type="match status" value="1"/>
</dbReference>
<dbReference type="PIRSF" id="PIRSF002155">
    <property type="entry name" value="Ribosomal_L1"/>
    <property type="match status" value="1"/>
</dbReference>
<dbReference type="SUPFAM" id="SSF56808">
    <property type="entry name" value="Ribosomal protein L1"/>
    <property type="match status" value="1"/>
</dbReference>
<dbReference type="PROSITE" id="PS01199">
    <property type="entry name" value="RIBOSOMAL_L1"/>
    <property type="match status" value="1"/>
</dbReference>
<keyword id="KW-0678">Repressor</keyword>
<keyword id="KW-0687">Ribonucleoprotein</keyword>
<keyword id="KW-0689">Ribosomal protein</keyword>
<keyword id="KW-0694">RNA-binding</keyword>
<keyword id="KW-0699">rRNA-binding</keyword>
<keyword id="KW-0810">Translation regulation</keyword>
<keyword id="KW-0820">tRNA-binding</keyword>
<name>RL1_LISMH</name>
<sequence>MAKKGKKYQDALKQIDANKVYTAEEAVELAKKIDFAKFDATVEVAFRLGVDPKKADQQIRGAVVLPNGTGKTQRVLVFAKGEKAKEAEAAGADYVGESEFVEKINQGWFEFDVIVATPDMMGEVGKLGRVLGPKGLMPNPKTGTVTMDVTKAVNEIKAGKVEYRVDKAGNVHAAIGKVSFDAAKLVENFRTVNDVLQKAKPAAAKGTYVKNLSVTTTFGPGIKVDPASL</sequence>
<accession>B8DF06</accession>
<proteinExistence type="inferred from homology"/>
<gene>
    <name evidence="1" type="primary">rplA</name>
    <name type="ordered locus">LMHCC_2391</name>
</gene>
<comment type="function">
    <text evidence="1">Binds directly to 23S rRNA. The L1 stalk is quite mobile in the ribosome, and is involved in E site tRNA release.</text>
</comment>
<comment type="function">
    <text evidence="1">Protein L1 is also a translational repressor protein, it controls the translation of the L11 operon by binding to its mRNA.</text>
</comment>
<comment type="subunit">
    <text evidence="1">Part of the 50S ribosomal subunit.</text>
</comment>
<comment type="similarity">
    <text evidence="1">Belongs to the universal ribosomal protein uL1 family.</text>
</comment>
<organism>
    <name type="scientific">Listeria monocytogenes serotype 4a (strain HCC23)</name>
    <dbReference type="NCBI Taxonomy" id="552536"/>
    <lineage>
        <taxon>Bacteria</taxon>
        <taxon>Bacillati</taxon>
        <taxon>Bacillota</taxon>
        <taxon>Bacilli</taxon>
        <taxon>Bacillales</taxon>
        <taxon>Listeriaceae</taxon>
        <taxon>Listeria</taxon>
    </lineage>
</organism>
<reference key="1">
    <citation type="journal article" date="2011" name="J. Bacteriol.">
        <title>Genome sequence of lineage III Listeria monocytogenes strain HCC23.</title>
        <authorList>
            <person name="Steele C.L."/>
            <person name="Donaldson J.R."/>
            <person name="Paul D."/>
            <person name="Banes M.M."/>
            <person name="Arick T."/>
            <person name="Bridges S.M."/>
            <person name="Lawrence M.L."/>
        </authorList>
    </citation>
    <scope>NUCLEOTIDE SEQUENCE [LARGE SCALE GENOMIC DNA]</scope>
    <source>
        <strain>HCC23</strain>
    </source>
</reference>
<feature type="chain" id="PRO_1000165686" description="Large ribosomal subunit protein uL1">
    <location>
        <begin position="1"/>
        <end position="229"/>
    </location>
</feature>